<accession>P25499</accession>
<feature type="chain" id="PRO_0000182449" description="Heat-inducible transcription repressor HrcA">
    <location>
        <begin position="1"/>
        <end position="343"/>
    </location>
</feature>
<evidence type="ECO:0000255" key="1">
    <source>
        <dbReference type="HAMAP-Rule" id="MF_00081"/>
    </source>
</evidence>
<evidence type="ECO:0000269" key="2">
    <source>
    </source>
</evidence>
<protein>
    <recommendedName>
        <fullName evidence="1">Heat-inducible transcription repressor HrcA</fullName>
    </recommendedName>
</protein>
<proteinExistence type="inferred from homology"/>
<dbReference type="EMBL" id="M84964">
    <property type="protein sequence ID" value="AAA22526.1"/>
    <property type="molecule type" value="Genomic_DNA"/>
</dbReference>
<dbReference type="EMBL" id="D84432">
    <property type="protein sequence ID" value="BAA12462.1"/>
    <property type="molecule type" value="Genomic_DNA"/>
</dbReference>
<dbReference type="EMBL" id="AL009126">
    <property type="protein sequence ID" value="CAB14491.1"/>
    <property type="molecule type" value="Genomic_DNA"/>
</dbReference>
<dbReference type="PIR" id="A41874">
    <property type="entry name" value="A41874"/>
</dbReference>
<dbReference type="RefSeq" id="NP_390427.1">
    <property type="nucleotide sequence ID" value="NC_000964.3"/>
</dbReference>
<dbReference type="RefSeq" id="WP_003246126.1">
    <property type="nucleotide sequence ID" value="NZ_OZ025638.1"/>
</dbReference>
<dbReference type="SMR" id="P25499"/>
<dbReference type="FunCoup" id="P25499">
    <property type="interactions" value="226"/>
</dbReference>
<dbReference type="IntAct" id="P25499">
    <property type="interactions" value="6"/>
</dbReference>
<dbReference type="STRING" id="224308.BSU25490"/>
<dbReference type="PaxDb" id="224308-BSU25490"/>
<dbReference type="EnsemblBacteria" id="CAB14491">
    <property type="protein sequence ID" value="CAB14491"/>
    <property type="gene ID" value="BSU_25490"/>
</dbReference>
<dbReference type="GeneID" id="937843"/>
<dbReference type="KEGG" id="bsu:BSU25490"/>
<dbReference type="PATRIC" id="fig|224308.179.peg.2770"/>
<dbReference type="eggNOG" id="COG1420">
    <property type="taxonomic scope" value="Bacteria"/>
</dbReference>
<dbReference type="InParanoid" id="P25499"/>
<dbReference type="OrthoDB" id="9783139at2"/>
<dbReference type="PhylomeDB" id="P25499"/>
<dbReference type="BioCyc" id="BSUB:BSU25490-MONOMER"/>
<dbReference type="Proteomes" id="UP000001570">
    <property type="component" value="Chromosome"/>
</dbReference>
<dbReference type="GO" id="GO:0003677">
    <property type="term" value="F:DNA binding"/>
    <property type="evidence" value="ECO:0007669"/>
    <property type="project" value="InterPro"/>
</dbReference>
<dbReference type="GO" id="GO:0045892">
    <property type="term" value="P:negative regulation of DNA-templated transcription"/>
    <property type="evidence" value="ECO:0000315"/>
    <property type="project" value="CACAO"/>
</dbReference>
<dbReference type="FunFam" id="1.10.10.10:FF:000049">
    <property type="entry name" value="Heat-inducible transcription repressor HrcA"/>
    <property type="match status" value="1"/>
</dbReference>
<dbReference type="Gene3D" id="3.30.450.40">
    <property type="match status" value="1"/>
</dbReference>
<dbReference type="Gene3D" id="3.30.390.60">
    <property type="entry name" value="Heat-inducible transcription repressor hrca homolog, domain 3"/>
    <property type="match status" value="1"/>
</dbReference>
<dbReference type="Gene3D" id="1.10.10.10">
    <property type="entry name" value="Winged helix-like DNA-binding domain superfamily/Winged helix DNA-binding domain"/>
    <property type="match status" value="1"/>
</dbReference>
<dbReference type="HAMAP" id="MF_00081">
    <property type="entry name" value="HrcA"/>
    <property type="match status" value="1"/>
</dbReference>
<dbReference type="InterPro" id="IPR029016">
    <property type="entry name" value="GAF-like_dom_sf"/>
</dbReference>
<dbReference type="InterPro" id="IPR002571">
    <property type="entry name" value="HrcA"/>
</dbReference>
<dbReference type="InterPro" id="IPR021153">
    <property type="entry name" value="HrcA_C"/>
</dbReference>
<dbReference type="InterPro" id="IPR036388">
    <property type="entry name" value="WH-like_DNA-bd_sf"/>
</dbReference>
<dbReference type="InterPro" id="IPR036390">
    <property type="entry name" value="WH_DNA-bd_sf"/>
</dbReference>
<dbReference type="InterPro" id="IPR023120">
    <property type="entry name" value="WHTH_transcript_rep_HrcA_IDD"/>
</dbReference>
<dbReference type="NCBIfam" id="TIGR00331">
    <property type="entry name" value="hrcA"/>
    <property type="match status" value="1"/>
</dbReference>
<dbReference type="PANTHER" id="PTHR34824">
    <property type="entry name" value="HEAT-INDUCIBLE TRANSCRIPTION REPRESSOR HRCA"/>
    <property type="match status" value="1"/>
</dbReference>
<dbReference type="PANTHER" id="PTHR34824:SF1">
    <property type="entry name" value="HEAT-INDUCIBLE TRANSCRIPTION REPRESSOR HRCA"/>
    <property type="match status" value="1"/>
</dbReference>
<dbReference type="Pfam" id="PF01628">
    <property type="entry name" value="HrcA"/>
    <property type="match status" value="1"/>
</dbReference>
<dbReference type="PIRSF" id="PIRSF005485">
    <property type="entry name" value="HrcA"/>
    <property type="match status" value="1"/>
</dbReference>
<dbReference type="SUPFAM" id="SSF55781">
    <property type="entry name" value="GAF domain-like"/>
    <property type="match status" value="1"/>
</dbReference>
<dbReference type="SUPFAM" id="SSF46785">
    <property type="entry name" value="Winged helix' DNA-binding domain"/>
    <property type="match status" value="1"/>
</dbReference>
<sequence>MLTNRQLLILQVIINDFIKSAQPVGSRTLSKKDEITFSSATIRNEMADLEELGFIEKTHSSSGRVPSEKGYRYYVDHLLSPVKLTKSDLDQIHSIFKEKIFELEKTVQKSAQILSDLTNYTSIVLGPKLSENYLKQIQIIPIQPDMAVAILVTNTGHVENKTINFPTKMDLSDIEKLVNILNDRLSGVPMDELNERIFKEVVMYLRQHIKNYDNILDALRSTFHSTNHVEKLFFGGKINMLNQPEFHDITRVRSLLSLIEKEQDVLKLVQSPHTGISIKIGKENDYEEMENCSLITASYSVDQKQIGSIAIIGPTRMNYSRVVSLLQHVTSDLSKALTSLYDE</sequence>
<name>HRCA_BACSU</name>
<keyword id="KW-1185">Reference proteome</keyword>
<keyword id="KW-0678">Repressor</keyword>
<keyword id="KW-0346">Stress response</keyword>
<keyword id="KW-0804">Transcription</keyword>
<keyword id="KW-0805">Transcription regulation</keyword>
<comment type="function">
    <text evidence="1 2">Negative regulator of class I heat shock genes (grpE-dnaK-dnaJ and groELS operons). Prevents heat-shock induction of these operons.</text>
</comment>
<comment type="similarity">
    <text evidence="1">Belongs to the HrcA family.</text>
</comment>
<gene>
    <name evidence="1" type="primary">hrcA</name>
    <name type="synonym">yqeS</name>
    <name type="synonym">yqxE</name>
    <name type="ordered locus">BSU25490</name>
</gene>
<organism>
    <name type="scientific">Bacillus subtilis (strain 168)</name>
    <dbReference type="NCBI Taxonomy" id="224308"/>
    <lineage>
        <taxon>Bacteria</taxon>
        <taxon>Bacillati</taxon>
        <taxon>Bacillota</taxon>
        <taxon>Bacilli</taxon>
        <taxon>Bacillales</taxon>
        <taxon>Bacillaceae</taxon>
        <taxon>Bacillus</taxon>
    </lineage>
</organism>
<reference key="1">
    <citation type="journal article" date="1992" name="J. Bacteriol.">
        <title>Cloning, sequencing, and molecular analysis of the dnaK locus from Bacillus subtilis.</title>
        <authorList>
            <person name="Wetzstein M."/>
            <person name="Voelker U."/>
            <person name="Dedio J."/>
            <person name="Loebau S."/>
            <person name="Zuber U."/>
            <person name="Schiesswohl M."/>
            <person name="Herget C."/>
            <person name="Hecker M."/>
            <person name="Schumann W."/>
        </authorList>
    </citation>
    <scope>NUCLEOTIDE SEQUENCE [GENOMIC DNA]</scope>
    <source>
        <strain>168 / MB11</strain>
    </source>
</reference>
<reference key="2">
    <citation type="journal article" date="1996" name="Microbiology">
        <title>Systematic sequencing of the 283 kb 210 degrees-232 degrees region of the Bacillus subtilis genome containing the skin element and many sporulation genes.</title>
        <authorList>
            <person name="Mizuno M."/>
            <person name="Masuda S."/>
            <person name="Takemaru K."/>
            <person name="Hosono S."/>
            <person name="Sato T."/>
            <person name="Takeuchi M."/>
            <person name="Kobayashi Y."/>
        </authorList>
    </citation>
    <scope>NUCLEOTIDE SEQUENCE [GENOMIC DNA]</scope>
    <source>
        <strain>168 / JH642</strain>
    </source>
</reference>
<reference key="3">
    <citation type="journal article" date="1997" name="Nature">
        <title>The complete genome sequence of the Gram-positive bacterium Bacillus subtilis.</title>
        <authorList>
            <person name="Kunst F."/>
            <person name="Ogasawara N."/>
            <person name="Moszer I."/>
            <person name="Albertini A.M."/>
            <person name="Alloni G."/>
            <person name="Azevedo V."/>
            <person name="Bertero M.G."/>
            <person name="Bessieres P."/>
            <person name="Bolotin A."/>
            <person name="Borchert S."/>
            <person name="Borriss R."/>
            <person name="Boursier L."/>
            <person name="Brans A."/>
            <person name="Braun M."/>
            <person name="Brignell S.C."/>
            <person name="Bron S."/>
            <person name="Brouillet S."/>
            <person name="Bruschi C.V."/>
            <person name="Caldwell B."/>
            <person name="Capuano V."/>
            <person name="Carter N.M."/>
            <person name="Choi S.-K."/>
            <person name="Codani J.-J."/>
            <person name="Connerton I.F."/>
            <person name="Cummings N.J."/>
            <person name="Daniel R.A."/>
            <person name="Denizot F."/>
            <person name="Devine K.M."/>
            <person name="Duesterhoeft A."/>
            <person name="Ehrlich S.D."/>
            <person name="Emmerson P.T."/>
            <person name="Entian K.-D."/>
            <person name="Errington J."/>
            <person name="Fabret C."/>
            <person name="Ferrari E."/>
            <person name="Foulger D."/>
            <person name="Fritz C."/>
            <person name="Fujita M."/>
            <person name="Fujita Y."/>
            <person name="Fuma S."/>
            <person name="Galizzi A."/>
            <person name="Galleron N."/>
            <person name="Ghim S.-Y."/>
            <person name="Glaser P."/>
            <person name="Goffeau A."/>
            <person name="Golightly E.J."/>
            <person name="Grandi G."/>
            <person name="Guiseppi G."/>
            <person name="Guy B.J."/>
            <person name="Haga K."/>
            <person name="Haiech J."/>
            <person name="Harwood C.R."/>
            <person name="Henaut A."/>
            <person name="Hilbert H."/>
            <person name="Holsappel S."/>
            <person name="Hosono S."/>
            <person name="Hullo M.-F."/>
            <person name="Itaya M."/>
            <person name="Jones L.-M."/>
            <person name="Joris B."/>
            <person name="Karamata D."/>
            <person name="Kasahara Y."/>
            <person name="Klaerr-Blanchard M."/>
            <person name="Klein C."/>
            <person name="Kobayashi Y."/>
            <person name="Koetter P."/>
            <person name="Koningstein G."/>
            <person name="Krogh S."/>
            <person name="Kumano M."/>
            <person name="Kurita K."/>
            <person name="Lapidus A."/>
            <person name="Lardinois S."/>
            <person name="Lauber J."/>
            <person name="Lazarevic V."/>
            <person name="Lee S.-M."/>
            <person name="Levine A."/>
            <person name="Liu H."/>
            <person name="Masuda S."/>
            <person name="Mauel C."/>
            <person name="Medigue C."/>
            <person name="Medina N."/>
            <person name="Mellado R.P."/>
            <person name="Mizuno M."/>
            <person name="Moestl D."/>
            <person name="Nakai S."/>
            <person name="Noback M."/>
            <person name="Noone D."/>
            <person name="O'Reilly M."/>
            <person name="Ogawa K."/>
            <person name="Ogiwara A."/>
            <person name="Oudega B."/>
            <person name="Park S.-H."/>
            <person name="Parro V."/>
            <person name="Pohl T.M."/>
            <person name="Portetelle D."/>
            <person name="Porwollik S."/>
            <person name="Prescott A.M."/>
            <person name="Presecan E."/>
            <person name="Pujic P."/>
            <person name="Purnelle B."/>
            <person name="Rapoport G."/>
            <person name="Rey M."/>
            <person name="Reynolds S."/>
            <person name="Rieger M."/>
            <person name="Rivolta C."/>
            <person name="Rocha E."/>
            <person name="Roche B."/>
            <person name="Rose M."/>
            <person name="Sadaie Y."/>
            <person name="Sato T."/>
            <person name="Scanlan E."/>
            <person name="Schleich S."/>
            <person name="Schroeter R."/>
            <person name="Scoffone F."/>
            <person name="Sekiguchi J."/>
            <person name="Sekowska A."/>
            <person name="Seror S.J."/>
            <person name="Serror P."/>
            <person name="Shin B.-S."/>
            <person name="Soldo B."/>
            <person name="Sorokin A."/>
            <person name="Tacconi E."/>
            <person name="Takagi T."/>
            <person name="Takahashi H."/>
            <person name="Takemaru K."/>
            <person name="Takeuchi M."/>
            <person name="Tamakoshi A."/>
            <person name="Tanaka T."/>
            <person name="Terpstra P."/>
            <person name="Tognoni A."/>
            <person name="Tosato V."/>
            <person name="Uchiyama S."/>
            <person name="Vandenbol M."/>
            <person name="Vannier F."/>
            <person name="Vassarotti A."/>
            <person name="Viari A."/>
            <person name="Wambutt R."/>
            <person name="Wedler E."/>
            <person name="Wedler H."/>
            <person name="Weitzenegger T."/>
            <person name="Winters P."/>
            <person name="Wipat A."/>
            <person name="Yamamoto H."/>
            <person name="Yamane K."/>
            <person name="Yasumoto K."/>
            <person name="Yata K."/>
            <person name="Yoshida K."/>
            <person name="Yoshikawa H.-F."/>
            <person name="Zumstein E."/>
            <person name="Yoshikawa H."/>
            <person name="Danchin A."/>
        </authorList>
    </citation>
    <scope>NUCLEOTIDE SEQUENCE [LARGE SCALE GENOMIC DNA]</scope>
    <source>
        <strain>168</strain>
    </source>
</reference>
<reference key="4">
    <citation type="journal article" date="1996" name="J. Bacteriol.">
        <title>hrcA, the first gene of the Bacillus subtilis dnaK operon encodes a negative regulator of class I heat shock genes.</title>
        <authorList>
            <person name="Schulz A."/>
            <person name="Schumann W."/>
        </authorList>
    </citation>
    <scope>FUNCTION</scope>
</reference>